<sequence length="172" mass="19512">MNQSLTPSAGTDSKTGSSKAISFQDYLDLSTLDWARLRAILAPALYVDYTKIGKEKWDAMSADDFMAMVSNDDFLGDPCVKTQHLIGATYWERVSESKVIGHHQLRAAHQVYTSPDLKTVKLRGHSHATNEHYYVKSSGVWKFAGLKPEVRWNEYKFEEVFKGSYTQSEKHS</sequence>
<protein>
    <recommendedName>
        <fullName evidence="5">Scytalone dehydratase-like protein Arp1</fullName>
        <ecNumber evidence="5">4.2.1.-</ecNumber>
    </recommendedName>
</protein>
<reference key="1">
    <citation type="journal article" date="2011" name="PLoS Genet.">
        <title>Genome sequencing and comparative transcriptomics of the model entomopathogenic fungi Metarhizium anisopliae and M. acridum.</title>
        <authorList>
            <person name="Gao Q."/>
            <person name="Jin K."/>
            <person name="Ying S.-H."/>
            <person name="Zhang Y."/>
            <person name="Xiao G."/>
            <person name="Shang Y."/>
            <person name="Duan Z."/>
            <person name="Hu X."/>
            <person name="Xie X.-Q."/>
            <person name="Zhou G."/>
            <person name="Peng G."/>
            <person name="Luo Z."/>
            <person name="Huang W."/>
            <person name="Wang B."/>
            <person name="Fang W."/>
            <person name="Wang S."/>
            <person name="Zhong Y."/>
            <person name="Ma L.-J."/>
            <person name="St Leger R.J."/>
            <person name="Zhao G.-P."/>
            <person name="Pei Y."/>
            <person name="Feng M.-G."/>
            <person name="Xia Y."/>
            <person name="Wang C."/>
        </authorList>
    </citation>
    <scope>NUCLEOTIDE SEQUENCE [LARGE SCALE GENOMIC DNA]</scope>
    <source>
        <strain>ARSEF 23 / ATCC MYA-3075</strain>
    </source>
</reference>
<reference key="2">
    <citation type="journal article" date="2014" name="Proc. Natl. Acad. Sci. U.S.A.">
        <title>Trajectory and genomic determinants of fungal-pathogen speciation and host adaptation.</title>
        <authorList>
            <person name="Hu X."/>
            <person name="Xiao G."/>
            <person name="Zheng P."/>
            <person name="Shang Y."/>
            <person name="Su Y."/>
            <person name="Zhang X."/>
            <person name="Liu X."/>
            <person name="Zhan S."/>
            <person name="St Leger R.J."/>
            <person name="Wang C."/>
        </authorList>
    </citation>
    <scope>GENOME REANNOTATION</scope>
    <source>
        <strain>ARSEF 23 / ATCC MYA-3075</strain>
    </source>
</reference>
<reference key="3">
    <citation type="journal article" date="2018" name="PLoS Genet.">
        <title>Duplication of a Pks gene cluster and subsequent functional diversification facilitate environmental adaptation in Metarhizium species.</title>
        <authorList>
            <person name="Zeng G."/>
            <person name="Zhang P."/>
            <person name="Zhang Q."/>
            <person name="Zhao H."/>
            <person name="Li Z."/>
            <person name="Zhang X."/>
            <person name="Wang C."/>
            <person name="Yin W.B."/>
            <person name="Fang W."/>
        </authorList>
    </citation>
    <scope>IDENTIFICATION</scope>
    <scope>FUNCTION</scope>
</reference>
<dbReference type="EC" id="4.2.1.-" evidence="5"/>
<dbReference type="EMBL" id="ADNJ02000004">
    <property type="protein sequence ID" value="EFZ02012.2"/>
    <property type="molecule type" value="Genomic_DNA"/>
</dbReference>
<dbReference type="RefSeq" id="XP_007819430.2">
    <property type="nucleotide sequence ID" value="XM_007821239.2"/>
</dbReference>
<dbReference type="SMR" id="E9ET41"/>
<dbReference type="GeneID" id="19257527"/>
<dbReference type="KEGG" id="maj:MAA_03241"/>
<dbReference type="HOGENOM" id="CLU_101889_1_0_1"/>
<dbReference type="OrthoDB" id="5281072at2759"/>
<dbReference type="Proteomes" id="UP000002498">
    <property type="component" value="Unassembled WGS sequence"/>
</dbReference>
<dbReference type="GO" id="GO:0030411">
    <property type="term" value="F:scytalone dehydratase activity"/>
    <property type="evidence" value="ECO:0007669"/>
    <property type="project" value="InterPro"/>
</dbReference>
<dbReference type="GO" id="GO:0006582">
    <property type="term" value="P:melanin metabolic process"/>
    <property type="evidence" value="ECO:0007669"/>
    <property type="project" value="InterPro"/>
</dbReference>
<dbReference type="Gene3D" id="3.10.450.50">
    <property type="match status" value="1"/>
</dbReference>
<dbReference type="InterPro" id="IPR032710">
    <property type="entry name" value="NTF2-like_dom_sf"/>
</dbReference>
<dbReference type="InterPro" id="IPR004235">
    <property type="entry name" value="Scytalone_dehydratase"/>
</dbReference>
<dbReference type="InterPro" id="IPR049884">
    <property type="entry name" value="Scytalone_dh"/>
</dbReference>
<dbReference type="Pfam" id="PF02982">
    <property type="entry name" value="Scytalone_dh"/>
    <property type="match status" value="1"/>
</dbReference>
<dbReference type="PIRSF" id="PIRSF024851">
    <property type="entry name" value="SCD1"/>
    <property type="match status" value="1"/>
</dbReference>
<dbReference type="SUPFAM" id="SSF54427">
    <property type="entry name" value="NTF2-like"/>
    <property type="match status" value="1"/>
</dbReference>
<gene>
    <name evidence="3" type="primary">Arp1</name>
    <name type="ORF">MAA_03241</name>
</gene>
<name>ARP1_METRA</name>
<accession>E9ET41</accession>
<organism>
    <name type="scientific">Metarhizium robertsii (strain ARSEF 23 / ATCC MYA-3075)</name>
    <name type="common">Metarhizium anisopliae (strain ARSEF 23)</name>
    <dbReference type="NCBI Taxonomy" id="655844"/>
    <lineage>
        <taxon>Eukaryota</taxon>
        <taxon>Fungi</taxon>
        <taxon>Dikarya</taxon>
        <taxon>Ascomycota</taxon>
        <taxon>Pezizomycotina</taxon>
        <taxon>Sordariomycetes</taxon>
        <taxon>Hypocreomycetidae</taxon>
        <taxon>Hypocreales</taxon>
        <taxon>Clavicipitaceae</taxon>
        <taxon>Metarhizium</taxon>
    </lineage>
</organism>
<comment type="function">
    <text evidence="2">Scytalone dehydratase-like protein; part of the Pks2 gene cluster that mediates the formation of infectious structures (appressoria), enabling these fungi to kill insects faster (PubMed:29958281). The product of the Pks2 gene cluster is different from the one of Pks1 and has still not been identified (PubMed:29958281).</text>
</comment>
<comment type="subunit">
    <text evidence="1">Homotrimer. Each subunit contains an active site, located in the central part of the hydrophobic core of the monomer, which functions independently.</text>
</comment>
<comment type="similarity">
    <text evidence="4">Belongs to the scytalone dehydratase family.</text>
</comment>
<feature type="chain" id="PRO_0000445917" description="Scytalone dehydratase-like protein Arp1">
    <location>
        <begin position="1"/>
        <end position="172"/>
    </location>
</feature>
<feature type="active site" evidence="1">
    <location>
        <position position="84"/>
    </location>
</feature>
<feature type="active site" evidence="1">
    <location>
        <position position="109"/>
    </location>
</feature>
<feature type="binding site" evidence="1">
    <location>
        <position position="49"/>
    </location>
    <ligand>
        <name>substrate</name>
    </ligand>
</feature>
<feature type="binding site" evidence="1">
    <location>
        <position position="130"/>
    </location>
    <ligand>
        <name>substrate</name>
    </ligand>
</feature>
<proteinExistence type="inferred from homology"/>
<evidence type="ECO:0000250" key="1">
    <source>
        <dbReference type="UniProtKB" id="P56221"/>
    </source>
</evidence>
<evidence type="ECO:0000269" key="2">
    <source>
    </source>
</evidence>
<evidence type="ECO:0000303" key="3">
    <source>
    </source>
</evidence>
<evidence type="ECO:0000305" key="4"/>
<evidence type="ECO:0000305" key="5">
    <source>
    </source>
</evidence>
<keyword id="KW-0456">Lyase</keyword>